<sequence length="338" mass="38705">MIKQLYKNITICTLALSTTFTVLPATSYAKINSEIKAVSEKNLDGDTKMYTRTATTSDSQKNITQSLQFNFLTEPNYDKETVFIKAKGTIGSGLRILDPNGYWNSTLRWPGSYSVSIQNVDDNNNTNVTDFAPKNQDESREVKYTYGYKTGGDFSINRGGLTGNITKESNYSETISYQQPSYRTLLDQSTSHKGVGWKVEAHLINNMGHDHTRQLTNDSDNRTKSEIFSLTRNGNLWAKDNFTPKNKMPVTVSEGFNPEFLAVMSHDKKDEGKSKFVVHYKRSMDEFKIDWNRHGFWGYWSGENHVDKKEEKLSALYEVDWKTHNVKFVKVLNDNEKK</sequence>
<dbReference type="EMBL" id="BX571857">
    <property type="protein sequence ID" value="CAG43730.1"/>
    <property type="molecule type" value="Genomic_DNA"/>
</dbReference>
<dbReference type="SMR" id="Q6G7T8"/>
<dbReference type="KEGG" id="sas:SAS1924"/>
<dbReference type="HOGENOM" id="CLU_055394_0_1_9"/>
<dbReference type="GO" id="GO:0005576">
    <property type="term" value="C:extracellular region"/>
    <property type="evidence" value="ECO:0007669"/>
    <property type="project" value="InterPro"/>
</dbReference>
<dbReference type="GO" id="GO:0051715">
    <property type="term" value="P:cytolysis in another organism"/>
    <property type="evidence" value="ECO:0007669"/>
    <property type="project" value="InterPro"/>
</dbReference>
<dbReference type="Gene3D" id="2.70.240.10">
    <property type="entry name" value="Leukocidin/porin MspA"/>
    <property type="match status" value="1"/>
</dbReference>
<dbReference type="InterPro" id="IPR003963">
    <property type="entry name" value="Bi-component_toxin_staph"/>
</dbReference>
<dbReference type="InterPro" id="IPR016183">
    <property type="entry name" value="Leukocidin/Hemolysin_toxin"/>
</dbReference>
<dbReference type="InterPro" id="IPR036435">
    <property type="entry name" value="Leukocidin/porin_MspA_sf"/>
</dbReference>
<dbReference type="NCBIfam" id="TIGR01002">
    <property type="entry name" value="hlyII"/>
    <property type="match status" value="1"/>
</dbReference>
<dbReference type="Pfam" id="PF07968">
    <property type="entry name" value="Leukocidin"/>
    <property type="match status" value="1"/>
</dbReference>
<dbReference type="PRINTS" id="PR01468">
    <property type="entry name" value="BICOMPNTOXIN"/>
</dbReference>
<dbReference type="SUPFAM" id="SSF56959">
    <property type="entry name" value="Leukocidin-like"/>
    <property type="match status" value="1"/>
</dbReference>
<feature type="signal peptide" evidence="1">
    <location>
        <begin position="1"/>
        <end position="29"/>
    </location>
</feature>
<feature type="chain" id="PRO_0000298633" description="Uncharacterized leukocidin-like protein 1">
    <location>
        <begin position="30"/>
        <end position="338"/>
    </location>
</feature>
<evidence type="ECO:0000255" key="1"/>
<evidence type="ECO:0000305" key="2"/>
<comment type="similarity">
    <text evidence="2">Belongs to the aerolysin family.</text>
</comment>
<reference key="1">
    <citation type="journal article" date="2004" name="Proc. Natl. Acad. Sci. U.S.A.">
        <title>Complete genomes of two clinical Staphylococcus aureus strains: evidence for the rapid evolution of virulence and drug resistance.</title>
        <authorList>
            <person name="Holden M.T.G."/>
            <person name="Feil E.J."/>
            <person name="Lindsay J.A."/>
            <person name="Peacock S.J."/>
            <person name="Day N.P.J."/>
            <person name="Enright M.C."/>
            <person name="Foster T.J."/>
            <person name="Moore C.E."/>
            <person name="Hurst L."/>
            <person name="Atkin R."/>
            <person name="Barron A."/>
            <person name="Bason N."/>
            <person name="Bentley S.D."/>
            <person name="Chillingworth C."/>
            <person name="Chillingworth T."/>
            <person name="Churcher C."/>
            <person name="Clark L."/>
            <person name="Corton C."/>
            <person name="Cronin A."/>
            <person name="Doggett J."/>
            <person name="Dowd L."/>
            <person name="Feltwell T."/>
            <person name="Hance Z."/>
            <person name="Harris B."/>
            <person name="Hauser H."/>
            <person name="Holroyd S."/>
            <person name="Jagels K."/>
            <person name="James K.D."/>
            <person name="Lennard N."/>
            <person name="Line A."/>
            <person name="Mayes R."/>
            <person name="Moule S."/>
            <person name="Mungall K."/>
            <person name="Ormond D."/>
            <person name="Quail M.A."/>
            <person name="Rabbinowitsch E."/>
            <person name="Rutherford K.M."/>
            <person name="Sanders M."/>
            <person name="Sharp S."/>
            <person name="Simmonds M."/>
            <person name="Stevens K."/>
            <person name="Whitehead S."/>
            <person name="Barrell B.G."/>
            <person name="Spratt B.G."/>
            <person name="Parkhill J."/>
        </authorList>
    </citation>
    <scope>NUCLEOTIDE SEQUENCE [LARGE SCALE GENOMIC DNA]</scope>
    <source>
        <strain>MSSA476</strain>
    </source>
</reference>
<organism>
    <name type="scientific">Staphylococcus aureus (strain MSSA476)</name>
    <dbReference type="NCBI Taxonomy" id="282459"/>
    <lineage>
        <taxon>Bacteria</taxon>
        <taxon>Bacillati</taxon>
        <taxon>Bacillota</taxon>
        <taxon>Bacilli</taxon>
        <taxon>Bacillales</taxon>
        <taxon>Staphylococcaceae</taxon>
        <taxon>Staphylococcus</taxon>
    </lineage>
</organism>
<keyword id="KW-0732">Signal</keyword>
<gene>
    <name type="ordered locus">SAS1924</name>
</gene>
<accession>Q6G7T8</accession>
<protein>
    <recommendedName>
        <fullName>Uncharacterized leukocidin-like protein 1</fullName>
    </recommendedName>
</protein>
<name>LUKL1_STAAS</name>
<proteinExistence type="inferred from homology"/>